<accession>P0A444</accession>
<accession>P35876</accession>
<proteinExistence type="evidence at protein level"/>
<protein>
    <recommendedName>
        <fullName evidence="1">Photosystem II protein D1 1</fullName>
        <shortName evidence="1">PSII D1 protein 1</shortName>
        <ecNumber evidence="1 6 10">1.10.3.9</ecNumber>
    </recommendedName>
    <alternativeName>
        <fullName evidence="1">Photosystem II Q(B) protein 1</fullName>
    </alternativeName>
</protein>
<comment type="function">
    <text evidence="1 6 7 10">Photosystem II (PSII) is a light-driven water:plastoquinone oxidoreductase that uses light energy to abstract electrons from H(2)O, generating O(2) and a proton gradient subsequently used for ATP formation. It consists of a core antenna complex that captures photons, and an electron transfer chain that converts photonic excitation into a charge separation. The D1/D2 (PsbA/PsbD) reaction center heterodimer binds P680, the primary electron donor of PSII as well as several subsequent electron acceptors.</text>
</comment>
<comment type="catalytic activity">
    <reaction evidence="1 6 10">
        <text>2 a plastoquinone + 4 hnu + 2 H2O = 2 a plastoquinol + O2</text>
        <dbReference type="Rhea" id="RHEA:36359"/>
        <dbReference type="Rhea" id="RHEA-COMP:9561"/>
        <dbReference type="Rhea" id="RHEA-COMP:9562"/>
        <dbReference type="ChEBI" id="CHEBI:15377"/>
        <dbReference type="ChEBI" id="CHEBI:15379"/>
        <dbReference type="ChEBI" id="CHEBI:17757"/>
        <dbReference type="ChEBI" id="CHEBI:30212"/>
        <dbReference type="ChEBI" id="CHEBI:62192"/>
        <dbReference type="EC" id="1.10.3.9"/>
    </reaction>
</comment>
<comment type="cofactor">
    <text evidence="1 3 4 5 6 7 8 9 10 11 14">The D1/D2 heterodimer binds P680, chlorophylls that are the primary electron donor of PSII, and subsequent electron acceptors. It shares a non-heme iron and each subunit binds pheophytin, quinone, additional chlorophylls, carotenoids and lipids. D1 provides most of the ligands for the Mn4-Ca-O5 cluster of the oxygen-evolving complex (OEC). There is also a Cl(-1) ion associated with D1 and D2, which is required for oxygen evolution (PubMed:19219048, PubMed:21367867). PSII binds additional chlorophylls, carotenoids and specific lipids.</text>
</comment>
<comment type="subunit">
    <text evidence="1 3 4 5 6 7 8 9 10 11 12 13 14">PSII is composed of 1 copy each of membrane proteins PsbA, PsbB, PsbC, PsbD, PsbE, PsbF, PsbH, PsbI, PsbJ, PsbK, PsbL, PsbM, PsbT, PsbX, PsbY, PsbZ, Psb30/Ycf12, peripheral proteins PsbO, CyanoQ (PsbQ), PsbU, PsbV and a large number of cofactors. It forms dimeric complexes (By similarity) (PubMed:14764885, PubMed:16355230, PubMed:19219048, PubMed:20558739, PubMed:21367867, PubMed:22665786, PubMed:23413188, PubMed:25006873, PubMed:25043005, Ref.3). Precursor protein interacts with Ycf48 (PubMed:30061392). Part of a photosystem II (PSII) assembly intermediate complex PSII-I; crystallized from a strain deleted of psbJ, it forms monomeric PSII before addition of the oxygen evolving complex. PSII-I includes 3 assembly factors not found in mature PSII (Psb27, Psb28 and Psb34). In PSII-I the C-terminus of D1 (this subunit) is already processed but not yet found at its final position (PubMed:33846594).</text>
</comment>
<comment type="subcellular location">
    <subcellularLocation>
        <location evidence="1 3 4 5 6 7 8 9 10 11 13 14">Cellular thylakoid membrane</location>
        <topology evidence="1 3 4 5 6 7 8 9 10 11 13 14">Multi-pass membrane protein</topology>
    </subcellularLocation>
</comment>
<comment type="PTM">
    <text evidence="1">C-terminally processed by CtpA; processing is essential to allow assembly of the oxygen-evolving complex and thus photosynthetic growth.</text>
</comment>
<comment type="PTM">
    <text evidence="1 15 16 18 20 25">Tyr-161 forms a radical intermediate that is referred to as redox-active TyrZ, YZ or Y-Z.</text>
</comment>
<comment type="mass spectrometry">
    <text>Mass for C-terminally truncated D1. The measured protein is probably a mixture of the products of the 3 psbA genes.</text>
</comment>
<comment type="miscellaneous">
    <text evidence="1 4 5">2 of the reaction center chlorophylls (ChlD1 and ChlD2) are entirely coordinated by water.</text>
</comment>
<comment type="miscellaneous">
    <text evidence="1 7">Herbicides such as terbutryn, atrazine, BNT, diuron or ioxynil bind in the Q(B) binding site and block subsequent electron transfer.</text>
</comment>
<comment type="miscellaneous">
    <text evidence="1 2">Cyanobacteria usually contain more than 2 copies of the psbA gene; this strain encodes 3.</text>
</comment>
<comment type="similarity">
    <text evidence="1">Belongs to the reaction center PufL/M/PsbA/D family.</text>
</comment>
<gene>
    <name evidence="1 26" type="primary">psbA1</name>
    <name type="synonym">psbA-1</name>
    <name type="ordered locus">tlr1843</name>
</gene>
<reference key="1">
    <citation type="journal article" date="2002" name="DNA Res.">
        <title>Complete genome structure of the thermophilic cyanobacterium Thermosynechococcus elongatus BP-1.</title>
        <authorList>
            <person name="Nakamura Y."/>
            <person name="Kaneko T."/>
            <person name="Sato S."/>
            <person name="Ikeuchi M."/>
            <person name="Katoh H."/>
            <person name="Sasamoto S."/>
            <person name="Watanabe A."/>
            <person name="Iriguchi M."/>
            <person name="Kawashima K."/>
            <person name="Kimura T."/>
            <person name="Kishida Y."/>
            <person name="Kiyokawa C."/>
            <person name="Kohara M."/>
            <person name="Matsumoto M."/>
            <person name="Matsuno A."/>
            <person name="Nakazaki N."/>
            <person name="Shimpo S."/>
            <person name="Sugimoto M."/>
            <person name="Takeuchi C."/>
            <person name="Yamada M."/>
            <person name="Tabata S."/>
        </authorList>
    </citation>
    <scope>NUCLEOTIDE SEQUENCE [LARGE SCALE GENOMIC DNA]</scope>
    <source>
        <strain>NIES-2133 / IAM M-273 / BP-1</strain>
    </source>
</reference>
<reference key="2">
    <citation type="journal article" date="2001" name="Nature">
        <title>Crystal structure of photosystem II from Synechococcus elongatus at 3.8 A resolution.</title>
        <authorList>
            <person name="Zouni A."/>
            <person name="Witt H.T."/>
            <person name="Kern J."/>
            <person name="Fromme P."/>
            <person name="Krauss N."/>
            <person name="Saenger W."/>
            <person name="Orth P."/>
        </authorList>
    </citation>
    <scope>X-RAY CRYSTALLOGRAPHY (3.8 ANGSTROMS) OF 1-360</scope>
</reference>
<reference key="3">
    <citation type="journal article" date="2004" name="Phys. Chem. Chem. Phys.">
        <title>Crystal structure of cyanobacterial photosystem II at 3.2 A resolution: a closer look at the Mn-cluster.</title>
        <authorList>
            <person name="Biesiadka J."/>
            <person name="Loll B."/>
            <person name="Kern J."/>
            <person name="Irrgang K.-D."/>
            <person name="Zouni A."/>
        </authorList>
    </citation>
    <scope>X-RAY CRYSTALLOGRAPHY (3.20 ANGSTROMS) IN PHOTOSYSTEM II</scope>
    <scope>COFACTOR</scope>
    <scope>SUBUNIT</scope>
    <scope>SUBCELLULAR LOCATION</scope>
</reference>
<reference key="4">
    <citation type="journal article" date="2004" name="Science">
        <title>Architecture of the photosynthetic oxygen-evolving center.</title>
        <authorList>
            <person name="Ferreira K.N."/>
            <person name="Iverson T.M."/>
            <person name="Maghlaoui K."/>
            <person name="Barber J."/>
            <person name="Iwata S."/>
        </authorList>
    </citation>
    <scope>X-RAY CRYSTALLOGRAPHY (3.5 ANGSTROMS) OF 1-344 IN PHOTOSYSTEM II</scope>
    <scope>COFACTOR</scope>
    <scope>SUBUNIT</scope>
    <scope>SUBCELLULAR LOCATION</scope>
</reference>
<reference key="5">
    <citation type="journal article" date="2005" name="Nature">
        <title>Towards complete cofactor arrangement in the 3.0 A resolution structure of photosystem II.</title>
        <authorList>
            <person name="Loll B."/>
            <person name="Kern J."/>
            <person name="Saenger W."/>
            <person name="Zouni A."/>
            <person name="Biesiadka J."/>
        </authorList>
    </citation>
    <scope>X-RAY CRYSTALLOGRAPHY (3.0 ANGSTROMS) OF 1-344 IN PHOTOSYSTEM II</scope>
    <scope>COFACTOR</scope>
    <scope>SUBUNIT</scope>
    <scope>SUBCELLULAR LOCATION</scope>
    <source>
        <strain>NIES-2133 / IAM M-273 / BP-1</strain>
    </source>
</reference>
<reference key="6">
    <citation type="journal article" date="2009" name="Nat. Struct. Mol. Biol.">
        <title>Cyanobacterial photosystem II at 2.9-A resolution and the role of quinones, lipids, channels and chloride.</title>
        <authorList>
            <person name="Guskov A."/>
            <person name="Kern J."/>
            <person name="Gabdulkhakov A."/>
            <person name="Broser M."/>
            <person name="Zouni A."/>
            <person name="Saenger W."/>
        </authorList>
    </citation>
    <scope>X-RAY CRYSTALLOGRAPHY (2.90 ANGSTROMS) OF 1-344 IN PHOTOSYSTEM II</scope>
    <scope>COFACTOR</scope>
    <scope>SUBUNIT</scope>
    <scope>SUBCELLULAR LOCATION</scope>
    <scope>MASS SPECTROMETRY</scope>
    <source>
        <strain>NIES-2133 / IAM M-273 / BP-1</strain>
    </source>
</reference>
<reference key="7">
    <citation type="journal article" date="2010" name="J. Biol. Chem.">
        <title>Crystal structure of monomeric photosystem II from Thermosynechococcus elongatus at 3.6 A resolution.</title>
        <authorList>
            <person name="Broser M."/>
            <person name="Gabdulkhakov A."/>
            <person name="Kern J."/>
            <person name="Guskov A."/>
            <person name="Muh F."/>
            <person name="Saenger W."/>
            <person name="Zouni A."/>
        </authorList>
    </citation>
    <scope>X-RAY CRYSTALLOGRAPHY (3.60 ANGSTROMS) OF 1-344 IN PHOTOSYSTEM II</scope>
    <scope>FUNCTION</scope>
    <scope>CATALYTIC ACTIVITY</scope>
    <scope>COFACTOR</scope>
    <scope>SUBUNIT</scope>
    <scope>SUBCELLULAR LOCATION</scope>
    <source>
        <strain>NIES-2133 / IAM M-273 / BP-1</strain>
    </source>
</reference>
<reference key="8">
    <citation type="journal article" date="2011" name="J. Biol. Chem.">
        <title>Structural basis of cyanobacterial photosystem II inhibition by the herbicide terbutryn.</title>
        <authorList>
            <person name="Broser M."/>
            <person name="Glockner C."/>
            <person name="Gabdulkhakov A."/>
            <person name="Guskov A."/>
            <person name="Buchta J."/>
            <person name="Kern J."/>
            <person name="Muh F."/>
            <person name="Dau H."/>
            <person name="Saenger W."/>
            <person name="Zouni A."/>
        </authorList>
    </citation>
    <scope>X-RAY CRYSTALLOGRAPHY (3.20 ANGSTROMS) OF 1-344 IN PHOTOSYSTEM II IN COMPLEX WITH HERBICIDE</scope>
    <scope>FUNCTION</scope>
    <scope>COFACTOR</scope>
    <scope>SUBUNIT</scope>
    <scope>SUBCELLULAR LOCATION</scope>
    <source>
        <strain>NIES-2133 / IAM M-273 / BP-1</strain>
    </source>
</reference>
<reference key="9">
    <citation type="journal article" date="2012" name="Proc. Natl. Acad. Sci. U.S.A.">
        <title>Room temperature femtosecond X-ray diffraction of photosystem II microcrystals.</title>
        <authorList>
            <person name="Kern J."/>
            <person name="Alonso-Mori R."/>
            <person name="Hellmich J."/>
            <person name="Tran R."/>
            <person name="Hattne J."/>
            <person name="Laksmono H."/>
            <person name="Glockner C."/>
            <person name="Echols N."/>
            <person name="Sierra R.G."/>
            <person name="Sellberg J."/>
            <person name="Lassalle-Kaiser B."/>
            <person name="Gildea R.J."/>
            <person name="Glatzel P."/>
            <person name="Grosse-Kunstleve R.W."/>
            <person name="Latimer M.J."/>
            <person name="McQueen T.A."/>
            <person name="DiFiore D."/>
            <person name="Fry A.R."/>
            <person name="Messerschmidt M."/>
            <person name="Miahnahri A."/>
            <person name="Schafer D.W."/>
            <person name="Seibert M.M."/>
            <person name="Sokaras D."/>
            <person name="Weng T.C."/>
            <person name="Zwart P.H."/>
            <person name="White W.E."/>
            <person name="Adams P.D."/>
            <person name="Bogan M.J."/>
            <person name="Boutet S."/>
            <person name="Williams G.J."/>
            <person name="Messinger J."/>
            <person name="Sauter N.K."/>
            <person name="Zouni A."/>
            <person name="Bergmann U."/>
            <person name="Yano J."/>
            <person name="Yachandra V.K."/>
        </authorList>
    </citation>
    <scope>X-RAY CRYSTALLOGRAPHY (6.56 ANGSTROMS) OF 1-344 IN PHOTOSYSTEM II</scope>
    <scope>COFACTOR</scope>
    <scope>SUBUNIT</scope>
    <scope>SUBCELLULAR LOCATION</scope>
    <source>
        <strain>NIES-2133 / IAM M-273 / BP-1</strain>
    </source>
</reference>
<reference key="10">
    <citation type="journal article" date="2013" name="Science">
        <title>Simultaneous femtosecond X-ray spectroscopy and diffraction of photosystem II at room temperature.</title>
        <authorList>
            <person name="Kern J."/>
            <person name="Alonso-Mori R."/>
            <person name="Tran R."/>
            <person name="Hattne J."/>
            <person name="Gildea R.J."/>
            <person name="Echols N."/>
            <person name="Glockner C."/>
            <person name="Hellmich J."/>
            <person name="Laksmono H."/>
            <person name="Sierra R.G."/>
            <person name="Lassalle-Kaiser B."/>
            <person name="Koroidov S."/>
            <person name="Lampe A."/>
            <person name="Han G."/>
            <person name="Gul S."/>
            <person name="Difiore D."/>
            <person name="Milathianaki D."/>
            <person name="Fry A.R."/>
            <person name="Miahnahri A."/>
            <person name="Schafer D.W."/>
            <person name="Messerschmidt M."/>
            <person name="Seibert M.M."/>
            <person name="Koglin J.E."/>
            <person name="Sokaras D."/>
            <person name="Weng T.C."/>
            <person name="Sellberg J."/>
            <person name="Latimer M.J."/>
            <person name="Grosse-Kunstleve R.W."/>
            <person name="Zwart P.H."/>
            <person name="White W.E."/>
            <person name="Glatzel P."/>
            <person name="Adams P.D."/>
            <person name="Bogan M.J."/>
            <person name="Williams G.J."/>
            <person name="Boutet S."/>
            <person name="Messinger J."/>
            <person name="Zouni A."/>
            <person name="Sauter N.K."/>
            <person name="Yachandra V.K."/>
            <person name="Bergmann U."/>
            <person name="Yano J."/>
        </authorList>
    </citation>
    <scope>X-RAY CRYSTALLOGRAPHY (5.70 ANGSTROMS) IN PHOTOSYSTEM II</scope>
    <scope>COFACTOR</scope>
    <scope>SUBUNIT</scope>
    <scope>SUBCELLULAR LOCATION</scope>
    <source>
        <strain>NIES-2133 / IAM M-273 / BP-1</strain>
    </source>
</reference>
<reference key="11">
    <citation type="journal article" date="2014" name="Nature">
        <title>Serial time-resolved crystallography of photosystem II using a femtosecond X-ray laser.</title>
        <authorList>
            <person name="Kupitz C."/>
            <person name="Basu S."/>
            <person name="Grotjohann I."/>
            <person name="Fromme R."/>
            <person name="Zatsepin N.A."/>
            <person name="Rendek K.N."/>
            <person name="Hunter M.S."/>
            <person name="Shoeman R.L."/>
            <person name="White T.A."/>
            <person name="Wang D."/>
            <person name="James D."/>
            <person name="Yang J.H."/>
            <person name="Cobb D.E."/>
            <person name="Reeder B."/>
            <person name="Sierra R.G."/>
            <person name="Liu H."/>
            <person name="Barty A."/>
            <person name="Aquila A.L."/>
            <person name="Deponte D."/>
            <person name="Kirian R.A."/>
            <person name="Bari S."/>
            <person name="Bergkamp J.J."/>
            <person name="Beyerlein K.R."/>
            <person name="Bogan M.J."/>
            <person name="Caleman C."/>
            <person name="Chao T.C."/>
            <person name="Conrad C.E."/>
            <person name="Davis K.M."/>
            <person name="Fleckenstein H."/>
            <person name="Galli L."/>
            <person name="Hau-Riege S.P."/>
            <person name="Kassemeyer S."/>
            <person name="Laksmono H."/>
            <person name="Liang M."/>
            <person name="Lomb L."/>
            <person name="Marchesini S."/>
            <person name="Martin A.V."/>
            <person name="Messerschmidt M."/>
            <person name="Milathianaki D."/>
            <person name="Nass K."/>
            <person name="Ros A."/>
            <person name="Roy-Chowdhury S."/>
            <person name="Schmidt K."/>
            <person name="Seibert M."/>
            <person name="Steinbrener J."/>
            <person name="Stellato F."/>
            <person name="Yan L."/>
            <person name="Yoon C."/>
            <person name="Moore T.A."/>
            <person name="Moore A.L."/>
            <person name="Pushkar Y."/>
            <person name="Williams G.J."/>
            <person name="Boutet S."/>
            <person name="Doak R.B."/>
            <person name="Weierstall U."/>
            <person name="Frank M."/>
            <person name="Chapman H.N."/>
            <person name="Spence J.C."/>
            <person name="Fromme P."/>
        </authorList>
    </citation>
    <scope>X-RAY CRYSTALLOGRAPHY (5.00 ANGSTROMS) OF 11-344 IN PHOTOSYSTEM II</scope>
    <scope>COFACTOR</scope>
    <scope>SUBUNIT</scope>
    <scope>SUBCELLULAR LOCATION</scope>
    <source>
        <strain>NIES-2133 / IAM M-273 / BP-1</strain>
    </source>
</reference>
<reference key="12">
    <citation type="journal article" date="2014" name="Nat. Commun.">
        <title>Taking snapshots of photosynthetic water oxidation using femtosecond X-ray diffraction and spectroscopy.</title>
        <authorList>
            <person name="Kern J."/>
            <person name="Tran R."/>
            <person name="Alonso-Mori R."/>
            <person name="Koroidov S."/>
            <person name="Echols N."/>
            <person name="Hattne J."/>
            <person name="Ibrahim M."/>
            <person name="Gul S."/>
            <person name="Laksmono H."/>
            <person name="Sierra R.G."/>
            <person name="Gildea R.J."/>
            <person name="Han G."/>
            <person name="Hellmich J."/>
            <person name="Lassalle-Kaiser B."/>
            <person name="Chatterjee R."/>
            <person name="Brewster A.S."/>
            <person name="Stan C.A."/>
            <person name="Gloeckner C."/>
            <person name="Lampe A."/>
            <person name="DiFiore D."/>
            <person name="Milathianaki D."/>
            <person name="Fry A.R."/>
            <person name="Seibert M.M."/>
            <person name="Koglin J.E."/>
            <person name="Gallo E."/>
            <person name="Uhlig J."/>
            <person name="Sokaras D."/>
            <person name="Weng T.C."/>
            <person name="Zwart P.H."/>
            <person name="Skinner D.E."/>
            <person name="Bogan M.J."/>
            <person name="Messerschmidt M."/>
            <person name="Glatzel P."/>
            <person name="Williams G.J."/>
            <person name="Boutet S."/>
            <person name="Adams P.D."/>
            <person name="Zouni A."/>
            <person name="Messinger J."/>
            <person name="Sauter N.K."/>
            <person name="Bergmann U."/>
            <person name="Yano J."/>
            <person name="Yachandra V.K."/>
        </authorList>
    </citation>
    <scope>X-RAY CRYSTALLOGRAPHY (4.50 ANGSTROMS) OF 1-344 IN PHOTOSYSTEM II</scope>
    <scope>FUNCTION</scope>
    <scope>CATALYTIC ACTIVITY</scope>
    <scope>COFACTOR</scope>
    <scope>SUBUNIT</scope>
    <scope>SUBCELLULAR LOCATION</scope>
    <source>
        <strain>NIES-2133 / IAM M-273 / BP-1</strain>
    </source>
</reference>
<reference evidence="28 29" key="13">
    <citation type="journal article" date="2018" name="Proc. Natl. Acad. Sci. U.S.A.">
        <title>Ycf48 involved in the biogenesis of the oxygen-evolving photosystem II complex is a seven-bladed beta-propeller protein.</title>
        <authorList>
            <person name="Yu J."/>
            <person name="Knoppova J."/>
            <person name="Michoux F."/>
            <person name="Bialek W."/>
            <person name="Cota E."/>
            <person name="Shukla M.K."/>
            <person name="Straskova A."/>
            <person name="Pascual Aznar G."/>
            <person name="Sobotka R."/>
            <person name="Komenda J."/>
            <person name="Murray J.W."/>
            <person name="Nixon P.J."/>
        </authorList>
    </citation>
    <scope>X-RAY CRYSTALLOGRAPHY (1.08 ANGSTROMS) OF 335-344 IN COMPLEX WITH YCF48</scope>
    <scope>X-RAY CRYSTALLOGRAPHY (1.96 ANGSTROMS) OF 335-352 IN COMPLEX WITH YCF48</scope>
    <scope>INTERACTION WITH YCF48</scope>
    <source>
        <strain>NIES-2133 / IAM M-273 / BP-1</strain>
    </source>
</reference>
<reference evidence="30 31 32" key="14">
    <citation type="journal article" date="2021" name="Nat. Plants">
        <title>Structural insights into photosystem II assembly.</title>
        <authorList>
            <person name="Zabret J."/>
            <person name="Bohn S."/>
            <person name="Schuller S.K."/>
            <person name="Arnolds O."/>
            <person name="Moller M."/>
            <person name="Meier-Credo J."/>
            <person name="Liauw P."/>
            <person name="Chan A."/>
            <person name="Tajkhorshid E."/>
            <person name="Langer J.D."/>
            <person name="Stoll R."/>
            <person name="Krieger-Liszkay A."/>
            <person name="Engel B.D."/>
            <person name="Rudack T."/>
            <person name="Schuller J.M."/>
            <person name="Nowaczyk M.M."/>
        </authorList>
    </citation>
    <scope>STRUCTURE BY ELECTRON MICROSCOPY (2.68 ANGSTROMS) IN PSII-I ASSEMBLY COMPLEX</scope>
    <scope>SUBUNIT</scope>
    <scope>SUBCELLULAR LOCATION</scope>
    <scope>TOPOLOGY</scope>
    <source>
        <strain>NIES-2133 / IAM M-273 / BP-1</strain>
    </source>
</reference>
<feature type="initiator methionine" description="Removed" evidence="5">
    <location>
        <position position="1"/>
    </location>
</feature>
<feature type="chain" id="PRO_0000090485" description="Photosystem II protein D1 1">
    <location>
        <begin position="2"/>
        <end position="344"/>
    </location>
</feature>
<feature type="propeptide" id="PRO_0000316376" evidence="1">
    <location>
        <begin position="345"/>
        <end position="360"/>
    </location>
</feature>
<feature type="topological domain" description="Cytoplasmic" evidence="13 27">
    <location>
        <begin position="2"/>
        <end position="31"/>
    </location>
</feature>
<feature type="transmembrane region" description="Helical" evidence="13 27">
    <location>
        <begin position="32"/>
        <end position="53"/>
    </location>
</feature>
<feature type="topological domain" description="Lumenal" evidence="13 27">
    <location>
        <begin position="54"/>
        <end position="110"/>
    </location>
</feature>
<feature type="transmembrane region" description="Helical" evidence="13 27">
    <location>
        <begin position="111"/>
        <end position="132"/>
    </location>
</feature>
<feature type="topological domain" description="Cytoplasmic" evidence="13 27">
    <location>
        <begin position="133"/>
        <end position="142"/>
    </location>
</feature>
<feature type="transmembrane region" description="Helical" evidence="13 27">
    <location>
        <begin position="143"/>
        <end position="163"/>
    </location>
</feature>
<feature type="topological domain" description="Lumenal" evidence="13 27">
    <location>
        <begin position="164"/>
        <end position="191"/>
    </location>
</feature>
<feature type="transmembrane region" description="Helical" evidence="13 27">
    <location>
        <begin position="192"/>
        <end position="217"/>
    </location>
</feature>
<feature type="topological domain" description="Cytoplasmic" evidence="13 27">
    <location>
        <begin position="218"/>
        <end position="272"/>
    </location>
</feature>
<feature type="transmembrane region" description="Helical" evidence="13 27">
    <location>
        <begin position="273"/>
        <end position="295"/>
    </location>
</feature>
<feature type="topological domain" description="Lumenal" evidence="13 27">
    <location>
        <begin position="296"/>
        <end position="344"/>
    </location>
</feature>
<feature type="binding site" description="axial binding residue" evidence="1 4 5 16 19 20 21 22 24 25">
    <location>
        <position position="118"/>
    </location>
    <ligand>
        <name>chlorophyll a</name>
        <dbReference type="ChEBI" id="CHEBI:58416"/>
        <label>ChlzD1</label>
    </ligand>
    <ligandPart>
        <name>Mg</name>
        <dbReference type="ChEBI" id="CHEBI:25107"/>
    </ligandPart>
</feature>
<feature type="binding site" evidence="1 4 5 16 19 20 21 22 23 24 25">
    <location>
        <position position="126"/>
    </location>
    <ligand>
        <name>pheophytin a</name>
        <dbReference type="ChEBI" id="CHEBI:136840"/>
        <label>D1</label>
    </ligand>
</feature>
<feature type="binding site" evidence="4 5 16 19 20 21 22 23 24 25">
    <location>
        <position position="130"/>
    </location>
    <ligand>
        <name>pheophytin a</name>
        <dbReference type="ChEBI" id="CHEBI:136840"/>
        <label>D1</label>
    </ligand>
</feature>
<feature type="binding site" evidence="4 5 16 20 21 22 23 24 25">
    <location>
        <position position="147"/>
    </location>
    <ligand>
        <name>pheophytin a</name>
        <dbReference type="ChEBI" id="CHEBI:136840"/>
        <label>D1</label>
    </ligand>
</feature>
<feature type="binding site" evidence="1 5 16 17 19 20 21 22 23 24">
    <location>
        <position position="170"/>
    </location>
    <ligand>
        <name>[CaMn4O5] cluster</name>
        <dbReference type="ChEBI" id="CHEBI:189552"/>
    </ligand>
</feature>
<feature type="binding site" evidence="1 5 16 17 19 20 21 22 23 24">
    <location>
        <position position="189"/>
    </location>
    <ligand>
        <name>[CaMn4O5] cluster</name>
        <dbReference type="ChEBI" id="CHEBI:189552"/>
    </ligand>
</feature>
<feature type="binding site" description="axial binding residue" evidence="1 4 5 16 19 20 21 22 24 25">
    <location>
        <position position="198"/>
    </location>
    <ligand>
        <name>chlorophyll a</name>
        <dbReference type="ChEBI" id="CHEBI:58416"/>
        <label>PD1</label>
    </ligand>
    <ligandPart>
        <name>Mg</name>
        <dbReference type="ChEBI" id="CHEBI:25107"/>
    </ligandPart>
</feature>
<feature type="binding site" evidence="1 4 5 16 21 22 23 24">
    <location>
        <position position="215"/>
    </location>
    <ligand>
        <name>a quinone</name>
        <dbReference type="ChEBI" id="CHEBI:132124"/>
        <label>B</label>
    </ligand>
</feature>
<feature type="binding site" evidence="1 4 5 16 19 20 21 22 23 24 25">
    <location>
        <position position="215"/>
    </location>
    <ligand>
        <name>Fe cation</name>
        <dbReference type="ChEBI" id="CHEBI:24875"/>
        <note>ligand shared with heterodimeric partner</note>
    </ligand>
</feature>
<feature type="binding site" evidence="1 4 5 16 21 22 23 24">
    <location>
        <begin position="264"/>
        <end position="265"/>
    </location>
    <ligand>
        <name>a quinone</name>
        <dbReference type="ChEBI" id="CHEBI:132124"/>
        <label>B</label>
    </ligand>
</feature>
<feature type="binding site" evidence="1 4 5 16 19 20 21 22 23 24 25">
    <location>
        <position position="272"/>
    </location>
    <ligand>
        <name>Fe cation</name>
        <dbReference type="ChEBI" id="CHEBI:24875"/>
        <note>ligand shared with heterodimeric partner</note>
    </ligand>
</feature>
<feature type="binding site" evidence="1 5 16 17 19 20 21 22 23 24">
    <location>
        <position position="332"/>
    </location>
    <ligand>
        <name>[CaMn4O5] cluster</name>
        <dbReference type="ChEBI" id="CHEBI:189552"/>
    </ligand>
</feature>
<feature type="binding site" evidence="1 5 16 17 19 20 21 22 23 24">
    <location>
        <position position="333"/>
    </location>
    <ligand>
        <name>[CaMn4O5] cluster</name>
        <dbReference type="ChEBI" id="CHEBI:189552"/>
    </ligand>
</feature>
<feature type="binding site" evidence="1 5 16 17 19 20 22 23 24">
    <location>
        <position position="342"/>
    </location>
    <ligand>
        <name>[CaMn4O5] cluster</name>
        <dbReference type="ChEBI" id="CHEBI:189552"/>
    </ligand>
</feature>
<feature type="binding site" evidence="1 5 16 17 19 20 22 24">
    <location>
        <position position="344"/>
    </location>
    <ligand>
        <name>[CaMn4O5] cluster</name>
        <dbReference type="ChEBI" id="CHEBI:189552"/>
    </ligand>
</feature>
<feature type="site" description="Tyrosine radical intermediate" evidence="1 15 16 18 20 25">
    <location>
        <position position="161"/>
    </location>
</feature>
<feature type="site" description="Stabilizes free radical intermediate" evidence="1">
    <location>
        <position position="190"/>
    </location>
</feature>
<feature type="site" description="Cleavage; by CtpA" evidence="1">
    <location>
        <begin position="344"/>
        <end position="345"/>
    </location>
</feature>
<feature type="helix" evidence="37">
    <location>
        <begin position="13"/>
        <end position="21"/>
    </location>
</feature>
<feature type="strand" evidence="37">
    <location>
        <begin position="26"/>
        <end position="28"/>
    </location>
</feature>
<feature type="helix" evidence="37">
    <location>
        <begin position="31"/>
        <end position="54"/>
    </location>
</feature>
<feature type="strand" evidence="37">
    <location>
        <begin position="62"/>
        <end position="64"/>
    </location>
</feature>
<feature type="helix" evidence="37">
    <location>
        <begin position="71"/>
        <end position="73"/>
    </location>
</feature>
<feature type="turn" evidence="37">
    <location>
        <begin position="77"/>
        <end position="79"/>
    </location>
</feature>
<feature type="turn" evidence="37">
    <location>
        <begin position="87"/>
        <end position="91"/>
    </location>
</feature>
<feature type="helix" evidence="37">
    <location>
        <begin position="96"/>
        <end position="98"/>
    </location>
</feature>
<feature type="strand" evidence="37">
    <location>
        <begin position="99"/>
        <end position="101"/>
    </location>
</feature>
<feature type="helix" evidence="37">
    <location>
        <begin position="102"/>
        <end position="107"/>
    </location>
</feature>
<feature type="helix" evidence="37">
    <location>
        <begin position="110"/>
        <end position="136"/>
    </location>
</feature>
<feature type="helix" evidence="37">
    <location>
        <begin position="143"/>
        <end position="158"/>
    </location>
</feature>
<feature type="helix" evidence="37">
    <location>
        <begin position="160"/>
        <end position="165"/>
    </location>
</feature>
<feature type="helix" evidence="37">
    <location>
        <begin position="168"/>
        <end position="170"/>
    </location>
</feature>
<feature type="helix" evidence="37">
    <location>
        <begin position="176"/>
        <end position="190"/>
    </location>
</feature>
<feature type="helix" evidence="37">
    <location>
        <begin position="192"/>
        <end position="194"/>
    </location>
</feature>
<feature type="helix" evidence="37">
    <location>
        <begin position="196"/>
        <end position="221"/>
    </location>
</feature>
<feature type="strand" evidence="35">
    <location>
        <begin position="222"/>
        <end position="224"/>
    </location>
</feature>
<feature type="strand" evidence="33">
    <location>
        <begin position="229"/>
        <end position="231"/>
    </location>
</feature>
<feature type="helix" evidence="37">
    <location>
        <begin position="233"/>
        <end position="236"/>
    </location>
</feature>
<feature type="strand" evidence="36">
    <location>
        <begin position="240"/>
        <end position="244"/>
    </location>
</feature>
<feature type="helix" evidence="37">
    <location>
        <begin position="248"/>
        <end position="258"/>
    </location>
</feature>
<feature type="helix" evidence="37">
    <location>
        <begin position="261"/>
        <end position="263"/>
    </location>
</feature>
<feature type="helix" evidence="37">
    <location>
        <begin position="268"/>
        <end position="293"/>
    </location>
</feature>
<feature type="turn" evidence="37">
    <location>
        <begin position="294"/>
        <end position="296"/>
    </location>
</feature>
<feature type="strand" evidence="37">
    <location>
        <begin position="297"/>
        <end position="299"/>
    </location>
</feature>
<feature type="strand" evidence="34">
    <location>
        <begin position="309"/>
        <end position="311"/>
    </location>
</feature>
<feature type="strand" evidence="35">
    <location>
        <begin position="313"/>
        <end position="315"/>
    </location>
</feature>
<feature type="helix" evidence="37">
    <location>
        <begin position="317"/>
        <end position="331"/>
    </location>
</feature>
<feature type="turn" evidence="37">
    <location>
        <begin position="332"/>
        <end position="335"/>
    </location>
</feature>
<feature type="strand" evidence="38">
    <location>
        <begin position="338"/>
        <end position="340"/>
    </location>
</feature>
<dbReference type="EC" id="1.10.3.9" evidence="1 6 10"/>
<dbReference type="EMBL" id="BA000039">
    <property type="protein sequence ID" value="BAC09395.1"/>
    <property type="molecule type" value="Genomic_DNA"/>
</dbReference>
<dbReference type="RefSeq" id="NP_682633.1">
    <property type="nucleotide sequence ID" value="NC_004113.1"/>
</dbReference>
<dbReference type="RefSeq" id="WP_011057680.1">
    <property type="nucleotide sequence ID" value="NC_004113.1"/>
</dbReference>
<dbReference type="PDB" id="1S5L">
    <property type="method" value="X-ray"/>
    <property type="resolution" value="3.50 A"/>
    <property type="chains" value="A/a=1-344"/>
</dbReference>
<dbReference type="PDB" id="1W5C">
    <property type="method" value="X-ray"/>
    <property type="resolution" value="3.20 A"/>
    <property type="chains" value="A/G=1-360"/>
</dbReference>
<dbReference type="PDB" id="2AXT">
    <property type="method" value="X-ray"/>
    <property type="resolution" value="3.00 A"/>
    <property type="chains" value="A/a=1-344"/>
</dbReference>
<dbReference type="PDB" id="3KZI">
    <property type="method" value="X-ray"/>
    <property type="resolution" value="3.60 A"/>
    <property type="chains" value="A=1-344"/>
</dbReference>
<dbReference type="PDB" id="4FBY">
    <property type="method" value="X-ray"/>
    <property type="resolution" value="6.56 A"/>
    <property type="chains" value="A/G=1-344"/>
</dbReference>
<dbReference type="PDB" id="4IXQ">
    <property type="method" value="X-ray"/>
    <property type="resolution" value="5.70 A"/>
    <property type="chains" value="A/a=1-360"/>
</dbReference>
<dbReference type="PDB" id="4IXR">
    <property type="method" value="X-ray"/>
    <property type="resolution" value="5.90 A"/>
    <property type="chains" value="A/a=1-360"/>
</dbReference>
<dbReference type="PDB" id="4PBU">
    <property type="method" value="X-ray"/>
    <property type="resolution" value="5.00 A"/>
    <property type="chains" value="A/a=11-344"/>
</dbReference>
<dbReference type="PDB" id="4PJ0">
    <property type="method" value="X-ray"/>
    <property type="resolution" value="2.44 A"/>
    <property type="chains" value="A/a=1-344"/>
</dbReference>
<dbReference type="PDB" id="4RVY">
    <property type="method" value="X-ray"/>
    <property type="resolution" value="5.50 A"/>
    <property type="chains" value="A/a=11-344"/>
</dbReference>
<dbReference type="PDB" id="4TNH">
    <property type="method" value="X-ray"/>
    <property type="resolution" value="4.90 A"/>
    <property type="chains" value="A/a=1-344"/>
</dbReference>
<dbReference type="PDB" id="4TNI">
    <property type="method" value="X-ray"/>
    <property type="resolution" value="4.60 A"/>
    <property type="chains" value="A/a=1-344"/>
</dbReference>
<dbReference type="PDB" id="4TNJ">
    <property type="method" value="X-ray"/>
    <property type="resolution" value="4.50 A"/>
    <property type="chains" value="A/a=1-344"/>
</dbReference>
<dbReference type="PDB" id="4TNK">
    <property type="method" value="X-ray"/>
    <property type="resolution" value="5.20 A"/>
    <property type="chains" value="A/a=1-344"/>
</dbReference>
<dbReference type="PDB" id="4V62">
    <property type="method" value="X-ray"/>
    <property type="resolution" value="2.90 A"/>
    <property type="chains" value="AA/BA=1-344"/>
</dbReference>
<dbReference type="PDB" id="4V82">
    <property type="method" value="X-ray"/>
    <property type="resolution" value="3.20 A"/>
    <property type="chains" value="AA/BA=1-344"/>
</dbReference>
<dbReference type="PDB" id="5E79">
    <property type="method" value="X-ray"/>
    <property type="resolution" value="3.50 A"/>
    <property type="chains" value="A/a=11-344"/>
</dbReference>
<dbReference type="PDB" id="5E7C">
    <property type="method" value="X-ray"/>
    <property type="resolution" value="4.50 A"/>
    <property type="chains" value="A/a=11-344"/>
</dbReference>
<dbReference type="PDB" id="5H2F">
    <property type="method" value="X-ray"/>
    <property type="resolution" value="2.20 A"/>
    <property type="chains" value="A/a=11-344"/>
</dbReference>
<dbReference type="PDB" id="5KAF">
    <property type="method" value="X-ray"/>
    <property type="resolution" value="3.00 A"/>
    <property type="chains" value="A/a=1-344"/>
</dbReference>
<dbReference type="PDB" id="5KAI">
    <property type="method" value="X-ray"/>
    <property type="resolution" value="2.80 A"/>
    <property type="chains" value="A/a=1-344"/>
</dbReference>
<dbReference type="PDB" id="5MX2">
    <property type="method" value="X-ray"/>
    <property type="resolution" value="2.20 A"/>
    <property type="chains" value="A/a=1-344"/>
</dbReference>
<dbReference type="PDB" id="5OJ5">
    <property type="method" value="X-ray"/>
    <property type="resolution" value="1.08 A"/>
    <property type="chains" value="B=335-344"/>
</dbReference>
<dbReference type="PDB" id="5OJR">
    <property type="method" value="X-ray"/>
    <property type="resolution" value="1.96 A"/>
    <property type="chains" value="E/F=335-352"/>
</dbReference>
<dbReference type="PDB" id="5TIS">
    <property type="method" value="X-ray"/>
    <property type="resolution" value="2.25 A"/>
    <property type="chains" value="A/a=1-344"/>
</dbReference>
<dbReference type="PDB" id="5ZZN">
    <property type="method" value="X-ray"/>
    <property type="resolution" value="2.10 A"/>
    <property type="chains" value="A/a=11-344"/>
</dbReference>
<dbReference type="PDB" id="6DHE">
    <property type="method" value="X-ray"/>
    <property type="resolution" value="2.05 A"/>
    <property type="chains" value="A/a=11-344"/>
</dbReference>
<dbReference type="PDB" id="6DHF">
    <property type="method" value="X-ray"/>
    <property type="resolution" value="2.08 A"/>
    <property type="chains" value="A/a=11-344"/>
</dbReference>
<dbReference type="PDB" id="6DHG">
    <property type="method" value="X-ray"/>
    <property type="resolution" value="2.50 A"/>
    <property type="chains" value="A/a=11-344"/>
</dbReference>
<dbReference type="PDB" id="6DHH">
    <property type="method" value="X-ray"/>
    <property type="resolution" value="2.20 A"/>
    <property type="chains" value="A/a=11-344"/>
</dbReference>
<dbReference type="PDB" id="6DHO">
    <property type="method" value="X-ray"/>
    <property type="resolution" value="2.07 A"/>
    <property type="chains" value="A/a=11-344"/>
</dbReference>
<dbReference type="PDB" id="6DHP">
    <property type="method" value="X-ray"/>
    <property type="resolution" value="2.04 A"/>
    <property type="chains" value="A/a=11-344"/>
</dbReference>
<dbReference type="PDB" id="6W1O">
    <property type="method" value="X-ray"/>
    <property type="resolution" value="2.08 A"/>
    <property type="chains" value="A/a=11-344"/>
</dbReference>
<dbReference type="PDB" id="6W1P">
    <property type="method" value="X-ray"/>
    <property type="resolution" value="2.26 A"/>
    <property type="chains" value="A/a=11-344"/>
</dbReference>
<dbReference type="PDB" id="6W1Q">
    <property type="method" value="X-ray"/>
    <property type="resolution" value="2.27 A"/>
    <property type="chains" value="A/a=1-344"/>
</dbReference>
<dbReference type="PDB" id="6W1R">
    <property type="method" value="X-ray"/>
    <property type="resolution" value="2.23 A"/>
    <property type="chains" value="A/a=1-344"/>
</dbReference>
<dbReference type="PDB" id="6W1T">
    <property type="method" value="X-ray"/>
    <property type="resolution" value="2.01 A"/>
    <property type="chains" value="A/a=1-344"/>
</dbReference>
<dbReference type="PDB" id="6W1U">
    <property type="method" value="X-ray"/>
    <property type="resolution" value="2.09 A"/>
    <property type="chains" value="A/a=1-344"/>
</dbReference>
<dbReference type="PDB" id="6W1V">
    <property type="method" value="X-ray"/>
    <property type="resolution" value="2.09 A"/>
    <property type="chains" value="A/a=1-344"/>
</dbReference>
<dbReference type="PDB" id="7NHO">
    <property type="method" value="EM"/>
    <property type="resolution" value="2.66 A"/>
    <property type="chains" value="A=1-360"/>
</dbReference>
<dbReference type="PDB" id="7NHP">
    <property type="method" value="EM"/>
    <property type="resolution" value="2.72 A"/>
    <property type="chains" value="A=1-360"/>
</dbReference>
<dbReference type="PDB" id="7NHQ">
    <property type="method" value="EM"/>
    <property type="resolution" value="2.68 A"/>
    <property type="chains" value="A=1-360"/>
</dbReference>
<dbReference type="PDB" id="7RF1">
    <property type="method" value="X-ray"/>
    <property type="resolution" value="1.89 A"/>
    <property type="chains" value="A/a=1-344"/>
</dbReference>
<dbReference type="PDB" id="7RF2">
    <property type="method" value="X-ray"/>
    <property type="resolution" value="2.08 A"/>
    <property type="chains" value="A/a=1-344"/>
</dbReference>
<dbReference type="PDB" id="7RF3">
    <property type="method" value="X-ray"/>
    <property type="resolution" value="2.26 A"/>
    <property type="chains" value="A/a=1-344"/>
</dbReference>
<dbReference type="PDB" id="7RF4">
    <property type="method" value="X-ray"/>
    <property type="resolution" value="2.27 A"/>
    <property type="chains" value="A/a=1-344"/>
</dbReference>
<dbReference type="PDB" id="7RF5">
    <property type="method" value="X-ray"/>
    <property type="resolution" value="2.23 A"/>
    <property type="chains" value="A/a=1-344"/>
</dbReference>
<dbReference type="PDB" id="7RF6">
    <property type="method" value="X-ray"/>
    <property type="resolution" value="2.01 A"/>
    <property type="chains" value="A/a=1-344"/>
</dbReference>
<dbReference type="PDB" id="7RF7">
    <property type="method" value="X-ray"/>
    <property type="resolution" value="2.09 A"/>
    <property type="chains" value="A/a=1-344"/>
</dbReference>
<dbReference type="PDB" id="7RF8">
    <property type="method" value="X-ray"/>
    <property type="resolution" value="2.09 A"/>
    <property type="chains" value="A/a=1-344"/>
</dbReference>
<dbReference type="PDB" id="8EZ5">
    <property type="method" value="X-ray"/>
    <property type="resolution" value="2.09 A"/>
    <property type="chains" value="A/a=1-344"/>
</dbReference>
<dbReference type="PDB" id="8F4C">
    <property type="method" value="X-ray"/>
    <property type="resolution" value="2.00 A"/>
    <property type="chains" value="A/a=1-344"/>
</dbReference>
<dbReference type="PDB" id="8F4D">
    <property type="method" value="X-ray"/>
    <property type="resolution" value="2.15 A"/>
    <property type="chains" value="A/a=1-344"/>
</dbReference>
<dbReference type="PDB" id="8F4E">
    <property type="method" value="X-ray"/>
    <property type="resolution" value="2.09 A"/>
    <property type="chains" value="A/a=1-344"/>
</dbReference>
<dbReference type="PDB" id="8F4F">
    <property type="method" value="X-ray"/>
    <property type="resolution" value="2.03 A"/>
    <property type="chains" value="A/a=1-344"/>
</dbReference>
<dbReference type="PDB" id="8F4G">
    <property type="method" value="X-ray"/>
    <property type="resolution" value="2.03 A"/>
    <property type="chains" value="A/a=1-344"/>
</dbReference>
<dbReference type="PDB" id="8F4H">
    <property type="method" value="X-ray"/>
    <property type="resolution" value="2.10 A"/>
    <property type="chains" value="A/a=1-344"/>
</dbReference>
<dbReference type="PDB" id="8F4I">
    <property type="method" value="X-ray"/>
    <property type="resolution" value="2.00 A"/>
    <property type="chains" value="A/a=1-344"/>
</dbReference>
<dbReference type="PDB" id="8F4J">
    <property type="method" value="X-ray"/>
    <property type="resolution" value="2.00 A"/>
    <property type="chains" value="A/a=1-344"/>
</dbReference>
<dbReference type="PDB" id="8F4K">
    <property type="method" value="X-ray"/>
    <property type="resolution" value="2.16 A"/>
    <property type="chains" value="A/a=1-344"/>
</dbReference>
<dbReference type="PDB" id="9EVX">
    <property type="method" value="EM"/>
    <property type="resolution" value="1.71 A"/>
    <property type="chains" value="A/a=1-344"/>
</dbReference>
<dbReference type="PDBsum" id="1S5L"/>
<dbReference type="PDBsum" id="1W5C"/>
<dbReference type="PDBsum" id="2AXT"/>
<dbReference type="PDBsum" id="3KZI"/>
<dbReference type="PDBsum" id="4FBY"/>
<dbReference type="PDBsum" id="4IXQ"/>
<dbReference type="PDBsum" id="4IXR"/>
<dbReference type="PDBsum" id="4PBU"/>
<dbReference type="PDBsum" id="4PJ0"/>
<dbReference type="PDBsum" id="4RVY"/>
<dbReference type="PDBsum" id="4TNH"/>
<dbReference type="PDBsum" id="4TNI"/>
<dbReference type="PDBsum" id="4TNJ"/>
<dbReference type="PDBsum" id="4TNK"/>
<dbReference type="PDBsum" id="4V62"/>
<dbReference type="PDBsum" id="4V82"/>
<dbReference type="PDBsum" id="5E79"/>
<dbReference type="PDBsum" id="5E7C"/>
<dbReference type="PDBsum" id="5H2F"/>
<dbReference type="PDBsum" id="5KAF"/>
<dbReference type="PDBsum" id="5KAI"/>
<dbReference type="PDBsum" id="5MX2"/>
<dbReference type="PDBsum" id="5OJ5"/>
<dbReference type="PDBsum" id="5OJR"/>
<dbReference type="PDBsum" id="5TIS"/>
<dbReference type="PDBsum" id="5ZZN"/>
<dbReference type="PDBsum" id="6DHE"/>
<dbReference type="PDBsum" id="6DHF"/>
<dbReference type="PDBsum" id="6DHG"/>
<dbReference type="PDBsum" id="6DHH"/>
<dbReference type="PDBsum" id="6DHO"/>
<dbReference type="PDBsum" id="6DHP"/>
<dbReference type="PDBsum" id="6W1O"/>
<dbReference type="PDBsum" id="6W1P"/>
<dbReference type="PDBsum" id="6W1Q"/>
<dbReference type="PDBsum" id="6W1R"/>
<dbReference type="PDBsum" id="6W1T"/>
<dbReference type="PDBsum" id="6W1U"/>
<dbReference type="PDBsum" id="6W1V"/>
<dbReference type="PDBsum" id="7NHO"/>
<dbReference type="PDBsum" id="7NHP"/>
<dbReference type="PDBsum" id="7NHQ"/>
<dbReference type="PDBsum" id="7RF1"/>
<dbReference type="PDBsum" id="7RF2"/>
<dbReference type="PDBsum" id="7RF3"/>
<dbReference type="PDBsum" id="7RF4"/>
<dbReference type="PDBsum" id="7RF5"/>
<dbReference type="PDBsum" id="7RF6"/>
<dbReference type="PDBsum" id="7RF7"/>
<dbReference type="PDBsum" id="7RF8"/>
<dbReference type="PDBsum" id="8EZ5"/>
<dbReference type="PDBsum" id="8F4C"/>
<dbReference type="PDBsum" id="8F4D"/>
<dbReference type="PDBsum" id="8F4E"/>
<dbReference type="PDBsum" id="8F4F"/>
<dbReference type="PDBsum" id="8F4G"/>
<dbReference type="PDBsum" id="8F4H"/>
<dbReference type="PDBsum" id="8F4I"/>
<dbReference type="PDBsum" id="8F4J"/>
<dbReference type="PDBsum" id="8F4K"/>
<dbReference type="PDBsum" id="9EVX"/>
<dbReference type="EMDB" id="EMD-12335"/>
<dbReference type="EMDB" id="EMD-12336"/>
<dbReference type="EMDB" id="EMD-12337"/>
<dbReference type="EMDB" id="EMD-50019"/>
<dbReference type="SMR" id="P0A444"/>
<dbReference type="DIP" id="DIP-48487N"/>
<dbReference type="IntAct" id="P0A444">
    <property type="interactions" value="1"/>
</dbReference>
<dbReference type="STRING" id="197221.gene:10748449"/>
<dbReference type="DrugBank" id="DB04735">
    <property type="generic name" value="Monogalactosyldiacylglycerol"/>
</dbReference>
<dbReference type="EnsemblBacteria" id="BAC09395">
    <property type="protein sequence ID" value="BAC09395"/>
    <property type="gene ID" value="BAC09395"/>
</dbReference>
<dbReference type="KEGG" id="tel:tlr1843"/>
<dbReference type="PATRIC" id="fig|197221.4.peg.1926"/>
<dbReference type="eggNOG" id="ENOG502Z87P">
    <property type="taxonomic scope" value="Bacteria"/>
</dbReference>
<dbReference type="BRENDA" id="1.10.3.9">
    <property type="organism ID" value="7763"/>
</dbReference>
<dbReference type="EvolutionaryTrace" id="P0A444"/>
<dbReference type="Proteomes" id="UP000000440">
    <property type="component" value="Chromosome"/>
</dbReference>
<dbReference type="GO" id="GO:0009523">
    <property type="term" value="C:photosystem II"/>
    <property type="evidence" value="ECO:0007669"/>
    <property type="project" value="UniProtKB-KW"/>
</dbReference>
<dbReference type="GO" id="GO:0031676">
    <property type="term" value="C:plasma membrane-derived thylakoid membrane"/>
    <property type="evidence" value="ECO:0007669"/>
    <property type="project" value="UniProtKB-SubCell"/>
</dbReference>
<dbReference type="GO" id="GO:0016168">
    <property type="term" value="F:chlorophyll binding"/>
    <property type="evidence" value="ECO:0007669"/>
    <property type="project" value="UniProtKB-UniRule"/>
</dbReference>
<dbReference type="GO" id="GO:0045156">
    <property type="term" value="F:electron transporter, transferring electrons within the cyclic electron transport pathway of photosynthesis activity"/>
    <property type="evidence" value="ECO:0007669"/>
    <property type="project" value="InterPro"/>
</dbReference>
<dbReference type="GO" id="GO:0005506">
    <property type="term" value="F:iron ion binding"/>
    <property type="evidence" value="ECO:0007669"/>
    <property type="project" value="UniProtKB-UniRule"/>
</dbReference>
<dbReference type="GO" id="GO:0016682">
    <property type="term" value="F:oxidoreductase activity, acting on diphenols and related substances as donors, oxygen as acceptor"/>
    <property type="evidence" value="ECO:0007669"/>
    <property type="project" value="UniProtKB-UniRule"/>
</dbReference>
<dbReference type="GO" id="GO:0010242">
    <property type="term" value="F:oxygen evolving activity"/>
    <property type="evidence" value="ECO:0007669"/>
    <property type="project" value="UniProtKB-EC"/>
</dbReference>
<dbReference type="GO" id="GO:0009772">
    <property type="term" value="P:photosynthetic electron transport in photosystem II"/>
    <property type="evidence" value="ECO:0007669"/>
    <property type="project" value="InterPro"/>
</dbReference>
<dbReference type="GO" id="GO:0009635">
    <property type="term" value="P:response to herbicide"/>
    <property type="evidence" value="ECO:0007669"/>
    <property type="project" value="UniProtKB-KW"/>
</dbReference>
<dbReference type="CDD" id="cd09289">
    <property type="entry name" value="Photosystem-II_D1"/>
    <property type="match status" value="1"/>
</dbReference>
<dbReference type="FunFam" id="1.20.85.10:FF:000002">
    <property type="entry name" value="Photosystem II protein D1"/>
    <property type="match status" value="1"/>
</dbReference>
<dbReference type="Gene3D" id="1.20.85.10">
    <property type="entry name" value="Photosystem II protein D1-like"/>
    <property type="match status" value="1"/>
</dbReference>
<dbReference type="HAMAP" id="MF_01379">
    <property type="entry name" value="PSII_PsbA_D1"/>
    <property type="match status" value="1"/>
</dbReference>
<dbReference type="InterPro" id="IPR055266">
    <property type="entry name" value="D1/D2"/>
</dbReference>
<dbReference type="InterPro" id="IPR036854">
    <property type="entry name" value="Photo_II_D1/D2_sf"/>
</dbReference>
<dbReference type="InterPro" id="IPR000484">
    <property type="entry name" value="Photo_RC_L/M"/>
</dbReference>
<dbReference type="InterPro" id="IPR055265">
    <property type="entry name" value="Photo_RC_L/M_CS"/>
</dbReference>
<dbReference type="InterPro" id="IPR005867">
    <property type="entry name" value="PSII_D1"/>
</dbReference>
<dbReference type="NCBIfam" id="TIGR01151">
    <property type="entry name" value="psbA"/>
    <property type="match status" value="1"/>
</dbReference>
<dbReference type="PANTHER" id="PTHR33149:SF12">
    <property type="entry name" value="PHOTOSYSTEM II D2 PROTEIN"/>
    <property type="match status" value="1"/>
</dbReference>
<dbReference type="PANTHER" id="PTHR33149">
    <property type="entry name" value="PHOTOSYSTEM II PROTEIN D1"/>
    <property type="match status" value="1"/>
</dbReference>
<dbReference type="Pfam" id="PF00124">
    <property type="entry name" value="Photo_RC"/>
    <property type="match status" value="1"/>
</dbReference>
<dbReference type="SUPFAM" id="SSF81483">
    <property type="entry name" value="Bacterial photosystem II reaction centre, L and M subunits"/>
    <property type="match status" value="1"/>
</dbReference>
<dbReference type="PROSITE" id="PS00244">
    <property type="entry name" value="REACTION_CENTER"/>
    <property type="match status" value="1"/>
</dbReference>
<keyword id="KW-0002">3D-structure</keyword>
<keyword id="KW-0106">Calcium</keyword>
<keyword id="KW-0148">Chlorophyll</keyword>
<keyword id="KW-0157">Chromophore</keyword>
<keyword id="KW-0249">Electron transport</keyword>
<keyword id="KW-0359">Herbicide resistance</keyword>
<keyword id="KW-0408">Iron</keyword>
<keyword id="KW-0460">Magnesium</keyword>
<keyword id="KW-0464">Manganese</keyword>
<keyword id="KW-0472">Membrane</keyword>
<keyword id="KW-0479">Metal-binding</keyword>
<keyword id="KW-0560">Oxidoreductase</keyword>
<keyword id="KW-0602">Photosynthesis</keyword>
<keyword id="KW-0604">Photosystem II</keyword>
<keyword id="KW-1185">Reference proteome</keyword>
<keyword id="KW-0793">Thylakoid</keyword>
<keyword id="KW-0812">Transmembrane</keyword>
<keyword id="KW-1133">Transmembrane helix</keyword>
<keyword id="KW-0813">Transport</keyword>
<name>PSBA1_THEVB</name>
<evidence type="ECO:0000255" key="1">
    <source>
        <dbReference type="HAMAP-Rule" id="MF_01379"/>
    </source>
</evidence>
<evidence type="ECO:0000269" key="2">
    <source>
    </source>
</evidence>
<evidence type="ECO:0000269" key="3">
    <source>
    </source>
</evidence>
<evidence type="ECO:0000269" key="4">
    <source>
    </source>
</evidence>
<evidence type="ECO:0000269" key="5">
    <source>
    </source>
</evidence>
<evidence type="ECO:0000269" key="6">
    <source>
    </source>
</evidence>
<evidence type="ECO:0000269" key="7">
    <source>
    </source>
</evidence>
<evidence type="ECO:0000269" key="8">
    <source>
    </source>
</evidence>
<evidence type="ECO:0000269" key="9">
    <source>
    </source>
</evidence>
<evidence type="ECO:0000269" key="10">
    <source>
    </source>
</evidence>
<evidence type="ECO:0000269" key="11">
    <source>
    </source>
</evidence>
<evidence type="ECO:0000269" key="12">
    <source>
    </source>
</evidence>
<evidence type="ECO:0000269" key="13">
    <source>
    </source>
</evidence>
<evidence type="ECO:0000269" key="14">
    <source ref="3"/>
</evidence>
<evidence type="ECO:0000303" key="15">
    <source>
    </source>
</evidence>
<evidence type="ECO:0000303" key="16">
    <source>
    </source>
</evidence>
<evidence type="ECO:0000303" key="17">
    <source>
    </source>
</evidence>
<evidence type="ECO:0000303" key="18">
    <source>
    </source>
</evidence>
<evidence type="ECO:0000303" key="19">
    <source>
    </source>
</evidence>
<evidence type="ECO:0000303" key="20">
    <source>
    </source>
</evidence>
<evidence type="ECO:0000303" key="21">
    <source>
    </source>
</evidence>
<evidence type="ECO:0000303" key="22">
    <source>
    </source>
</evidence>
<evidence type="ECO:0000303" key="23">
    <source>
    </source>
</evidence>
<evidence type="ECO:0000303" key="24">
    <source>
    </source>
</evidence>
<evidence type="ECO:0000303" key="25">
    <source ref="3"/>
</evidence>
<evidence type="ECO:0000305" key="26"/>
<evidence type="ECO:0000312" key="27">
    <source>
        <dbReference type="PDB" id="7NHQ"/>
    </source>
</evidence>
<evidence type="ECO:0007744" key="28">
    <source>
        <dbReference type="PDB" id="5OJ5"/>
    </source>
</evidence>
<evidence type="ECO:0007744" key="29">
    <source>
        <dbReference type="PDB" id="5OJR"/>
    </source>
</evidence>
<evidence type="ECO:0007744" key="30">
    <source>
        <dbReference type="PDB" id="7NHO"/>
    </source>
</evidence>
<evidence type="ECO:0007744" key="31">
    <source>
        <dbReference type="PDB" id="7NHP"/>
    </source>
</evidence>
<evidence type="ECO:0007744" key="32">
    <source>
        <dbReference type="PDB" id="7NHQ"/>
    </source>
</evidence>
<evidence type="ECO:0007829" key="33">
    <source>
        <dbReference type="PDB" id="5MX2"/>
    </source>
</evidence>
<evidence type="ECO:0007829" key="34">
    <source>
        <dbReference type="PDB" id="5ZZN"/>
    </source>
</evidence>
<evidence type="ECO:0007829" key="35">
    <source>
        <dbReference type="PDB" id="7NHO"/>
    </source>
</evidence>
<evidence type="ECO:0007829" key="36">
    <source>
        <dbReference type="PDB" id="7NHQ"/>
    </source>
</evidence>
<evidence type="ECO:0007829" key="37">
    <source>
        <dbReference type="PDB" id="8F4C"/>
    </source>
</evidence>
<evidence type="ECO:0007829" key="38">
    <source>
        <dbReference type="PDB" id="8F4D"/>
    </source>
</evidence>
<organism>
    <name type="scientific">Thermosynechococcus vestitus (strain NIES-2133 / IAM M-273 / BP-1)</name>
    <dbReference type="NCBI Taxonomy" id="197221"/>
    <lineage>
        <taxon>Bacteria</taxon>
        <taxon>Bacillati</taxon>
        <taxon>Cyanobacteriota</taxon>
        <taxon>Cyanophyceae</taxon>
        <taxon>Acaryochloridales</taxon>
        <taxon>Thermosynechococcaceae</taxon>
        <taxon>Thermosynechococcus</taxon>
    </lineage>
</organism>
<sequence>MTTTLQRRESANLWERFCNWVTSTDNRLYVGWFGVIMIPTLLAATICFVIAFIAAPPVDIDGIREPVSGSLLYGNNIITGAVVPSSNAIGLHFYPIWEAASLDEWLYNGGPYQLIIFHFLLGASCYMGRQWELSYRLGMRPWICVAYSAPLASAFAVFLIYPIGQGSFSDGMPLGISGTFNFMIVFQAEHNILMHPFHQLGVAGVFGGALFCAMHGSLVTSSLIRETTETESANYGYKFGQEEETYNIVAAHGYFGRLIFQYASFNNSRSLHFFLAAWPVVGVWFTALGISTMAFNLNGFNFNHSVIDAKGNVINTWADIINRANLGMEVMHERNAHNFPLDLASAESAPVAMIAPSING</sequence>